<sequence length="284" mass="32076">PTPSPEARVASRPFLDSPLPGSPRSGSPTGYITATKAISAGKLEHVAEKFSNFYNEIELEKQQRRMADAARFQMLTDSIAKLEKSLEAEIKRRAESDKQIQVHFESEVKGLQERTALQLADLQAAFKTSVDGLSRTMQDLHTIIKEEREQRRSDIEHLAGSLVNKVNECVAALDEERISRMDAESKILKQIATDVFRVQEKIDTEKGTREAELATLRSEIHEVLGNRNLSDEKFQTLVLDEINNLKSAVQMEREERISEDDEIVQAVNDYTRALQDGLRIVNNS</sequence>
<name>SFAS_SPESI</name>
<protein>
    <recommendedName>
        <fullName>SF-assemblin</fullName>
    </recommendedName>
</protein>
<proteinExistence type="evidence at protein level"/>
<reference key="1">
    <citation type="journal article" date="1993" name="J. Cell Biol.">
        <title>SF-assemblin, the structural protein of the 2-nm filaments from striated microtubule associated fibers of algal flagellar roots, forms a segmented coiled coil.</title>
        <authorList>
            <person name="Weber K."/>
            <person name="Geisler N."/>
            <person name="Plessmann U."/>
            <person name="Bremerich A."/>
            <person name="Lechtreck K.-F."/>
            <person name="Melkonian M."/>
        </authorList>
    </citation>
    <scope>PROTEIN SEQUENCE</scope>
</reference>
<organism>
    <name type="scientific">Spermatozopsis similis</name>
    <name type="common">Green alga</name>
    <dbReference type="NCBI Taxonomy" id="3192"/>
    <lineage>
        <taxon>Eukaryota</taxon>
        <taxon>Viridiplantae</taxon>
        <taxon>Chlorophyta</taxon>
        <taxon>core chlorophytes</taxon>
        <taxon>Chlorophyceae</taxon>
        <taxon>CS clade</taxon>
        <taxon>Chlamydomonadales</taxon>
        <taxon>Dunaliellaceae</taxon>
        <taxon>Spermatozopsis</taxon>
    </lineage>
</organism>
<evidence type="ECO:0000255" key="1"/>
<evidence type="ECO:0000256" key="2">
    <source>
        <dbReference type="SAM" id="MobiDB-lite"/>
    </source>
</evidence>
<evidence type="ECO:0000305" key="3"/>
<comment type="function">
    <text>Major component of the striated microtubule-associated fibers (SMAFs; system-I-fibers).</text>
</comment>
<comment type="subcellular location">
    <subcellularLocation>
        <location>Cytoplasm</location>
        <location>Cytoskeleton</location>
    </subcellularLocation>
</comment>
<comment type="domain">
    <text>Consists of a small non-helical N-terminal domain and a rod domain with a 29 residue repeat pattern based on four heptads followed by a skip residue. This alpha-helical protein is characterized by the ability to form a special segmented coiled coil and to assemble into striated fibers of 2 nm protofilaments.</text>
</comment>
<comment type="PTM">
    <text>Consists of at least four isoforms including two phosphorylated.</text>
</comment>
<comment type="similarity">
    <text evidence="3">Belongs to the SF-assemblin family.</text>
</comment>
<feature type="chain" id="PRO_0000221443" description="SF-assemblin">
    <location>
        <begin position="1"/>
        <end position="284"/>
    </location>
</feature>
<feature type="region of interest" description="Nonhelical region">
    <location>
        <begin position="1"/>
        <end position="38"/>
    </location>
</feature>
<feature type="region of interest" description="Disordered" evidence="2">
    <location>
        <begin position="1"/>
        <end position="30"/>
    </location>
</feature>
<feature type="region of interest" description="Rod">
    <location>
        <begin position="39"/>
        <end position="284"/>
    </location>
</feature>
<feature type="coiled-coil region" evidence="1">
    <location>
        <begin position="56"/>
        <end position="102"/>
    </location>
</feature>
<feature type="coiled-coil region" evidence="1">
    <location>
        <begin position="239"/>
        <end position="268"/>
    </location>
</feature>
<feature type="compositionally biased region" description="Low complexity" evidence="2">
    <location>
        <begin position="17"/>
        <end position="30"/>
    </location>
</feature>
<accession>P55925</accession>
<dbReference type="PIR" id="A40689">
    <property type="entry name" value="A40689"/>
</dbReference>
<dbReference type="SMR" id="P55925"/>
<dbReference type="GO" id="GO:0005737">
    <property type="term" value="C:cytoplasm"/>
    <property type="evidence" value="ECO:0007669"/>
    <property type="project" value="UniProtKB-KW"/>
</dbReference>
<dbReference type="GO" id="GO:0005874">
    <property type="term" value="C:microtubule"/>
    <property type="evidence" value="ECO:0007669"/>
    <property type="project" value="UniProtKB-KW"/>
</dbReference>
<dbReference type="GO" id="GO:0005200">
    <property type="term" value="F:structural constituent of cytoskeleton"/>
    <property type="evidence" value="ECO:0007669"/>
    <property type="project" value="InterPro"/>
</dbReference>
<dbReference type="InterPro" id="IPR008374">
    <property type="entry name" value="SF_assemblin/giardin_b"/>
</dbReference>
<dbReference type="PANTHER" id="PTHR40412">
    <property type="entry name" value="SF-ASSEMBLIN"/>
    <property type="match status" value="1"/>
</dbReference>
<dbReference type="PANTHER" id="PTHR40412:SF1">
    <property type="entry name" value="SF-ASSEMBLIN"/>
    <property type="match status" value="1"/>
</dbReference>
<dbReference type="Pfam" id="PF06705">
    <property type="entry name" value="SF-assemblin"/>
    <property type="match status" value="1"/>
</dbReference>
<dbReference type="PRINTS" id="PR01799">
    <property type="entry name" value="SFASSEMBLIN"/>
</dbReference>
<keyword id="KW-0175">Coiled coil</keyword>
<keyword id="KW-0963">Cytoplasm</keyword>
<keyword id="KW-0206">Cytoskeleton</keyword>
<keyword id="KW-0903">Direct protein sequencing</keyword>
<keyword id="KW-0493">Microtubule</keyword>
<keyword id="KW-0597">Phosphoprotein</keyword>